<feature type="chain" id="PRO_0000225162" description="Crossover junction endodeoxyribonuclease RuvC">
    <location>
        <begin position="1"/>
        <end position="196"/>
    </location>
</feature>
<feature type="active site" evidence="1">
    <location>
        <position position="19"/>
    </location>
</feature>
<feature type="active site" evidence="1">
    <location>
        <position position="80"/>
    </location>
</feature>
<feature type="active site" evidence="1">
    <location>
        <position position="153"/>
    </location>
</feature>
<feature type="binding site" evidence="1">
    <location>
        <position position="19"/>
    </location>
    <ligand>
        <name>Mg(2+)</name>
        <dbReference type="ChEBI" id="CHEBI:18420"/>
        <label>1</label>
    </ligand>
</feature>
<feature type="binding site" evidence="1">
    <location>
        <position position="80"/>
    </location>
    <ligand>
        <name>Mg(2+)</name>
        <dbReference type="ChEBI" id="CHEBI:18420"/>
        <label>2</label>
    </ligand>
</feature>
<feature type="binding site" evidence="1">
    <location>
        <position position="153"/>
    </location>
    <ligand>
        <name>Mg(2+)</name>
        <dbReference type="ChEBI" id="CHEBI:18420"/>
        <label>1</label>
    </ligand>
</feature>
<sequence length="196" mass="20877">MSIPKSTPDRRVTRVMGVDPGLTRCGVGVVEGGLGSSLKLIAVGVIRTPADLDHAHRLLRIHDGLEEWRDHTRPDAIAVEKVFAQHNRNTVAGTAQAAGIAMMIAARHGLPVALHTPSEVKAAISGSGRADKAQVGFMVARVLRLSAPPKPADAADAVALAICHLWRGGAARRIEAAVATQRRGRRVPRSWKDLAR</sequence>
<protein>
    <recommendedName>
        <fullName evidence="1">Crossover junction endodeoxyribonuclease RuvC</fullName>
        <ecNumber evidence="1">3.1.21.10</ecNumber>
    </recommendedName>
    <alternativeName>
        <fullName evidence="1">Holliday junction nuclease RuvC</fullName>
    </alternativeName>
    <alternativeName>
        <fullName evidence="1">Holliday junction resolvase RuvC</fullName>
    </alternativeName>
</protein>
<organism>
    <name type="scientific">Cutibacterium acnes (strain DSM 16379 / KPA171202)</name>
    <name type="common">Propionibacterium acnes</name>
    <dbReference type="NCBI Taxonomy" id="267747"/>
    <lineage>
        <taxon>Bacteria</taxon>
        <taxon>Bacillati</taxon>
        <taxon>Actinomycetota</taxon>
        <taxon>Actinomycetes</taxon>
        <taxon>Propionibacteriales</taxon>
        <taxon>Propionibacteriaceae</taxon>
        <taxon>Cutibacterium</taxon>
    </lineage>
</organism>
<evidence type="ECO:0000255" key="1">
    <source>
        <dbReference type="HAMAP-Rule" id="MF_00034"/>
    </source>
</evidence>
<gene>
    <name evidence="1" type="primary">ruvC</name>
    <name type="ordered locus">PPA1158</name>
</gene>
<proteinExistence type="inferred from homology"/>
<accession>Q6A8K9</accession>
<name>RUVC_CUTAK</name>
<keyword id="KW-0963">Cytoplasm</keyword>
<keyword id="KW-0227">DNA damage</keyword>
<keyword id="KW-0233">DNA recombination</keyword>
<keyword id="KW-0234">DNA repair</keyword>
<keyword id="KW-0238">DNA-binding</keyword>
<keyword id="KW-0255">Endonuclease</keyword>
<keyword id="KW-0378">Hydrolase</keyword>
<keyword id="KW-0460">Magnesium</keyword>
<keyword id="KW-0479">Metal-binding</keyword>
<keyword id="KW-0540">Nuclease</keyword>
<dbReference type="EC" id="3.1.21.10" evidence="1"/>
<dbReference type="EMBL" id="AE017283">
    <property type="protein sequence ID" value="AAT82907.1"/>
    <property type="molecule type" value="Genomic_DNA"/>
</dbReference>
<dbReference type="SMR" id="Q6A8K9"/>
<dbReference type="EnsemblBacteria" id="AAT82907">
    <property type="protein sequence ID" value="AAT82907"/>
    <property type="gene ID" value="PPA1158"/>
</dbReference>
<dbReference type="KEGG" id="pac:PPA1158"/>
<dbReference type="eggNOG" id="COG0817">
    <property type="taxonomic scope" value="Bacteria"/>
</dbReference>
<dbReference type="HOGENOM" id="CLU_091257_0_2_11"/>
<dbReference type="Proteomes" id="UP000000603">
    <property type="component" value="Chromosome"/>
</dbReference>
<dbReference type="GO" id="GO:0005737">
    <property type="term" value="C:cytoplasm"/>
    <property type="evidence" value="ECO:0007669"/>
    <property type="project" value="UniProtKB-SubCell"/>
</dbReference>
<dbReference type="GO" id="GO:0048476">
    <property type="term" value="C:Holliday junction resolvase complex"/>
    <property type="evidence" value="ECO:0007669"/>
    <property type="project" value="UniProtKB-UniRule"/>
</dbReference>
<dbReference type="GO" id="GO:0008821">
    <property type="term" value="F:crossover junction DNA endonuclease activity"/>
    <property type="evidence" value="ECO:0007669"/>
    <property type="project" value="UniProtKB-UniRule"/>
</dbReference>
<dbReference type="GO" id="GO:0003677">
    <property type="term" value="F:DNA binding"/>
    <property type="evidence" value="ECO:0007669"/>
    <property type="project" value="UniProtKB-KW"/>
</dbReference>
<dbReference type="GO" id="GO:0000287">
    <property type="term" value="F:magnesium ion binding"/>
    <property type="evidence" value="ECO:0007669"/>
    <property type="project" value="UniProtKB-UniRule"/>
</dbReference>
<dbReference type="GO" id="GO:0006310">
    <property type="term" value="P:DNA recombination"/>
    <property type="evidence" value="ECO:0007669"/>
    <property type="project" value="UniProtKB-UniRule"/>
</dbReference>
<dbReference type="GO" id="GO:0006281">
    <property type="term" value="P:DNA repair"/>
    <property type="evidence" value="ECO:0007669"/>
    <property type="project" value="UniProtKB-UniRule"/>
</dbReference>
<dbReference type="FunFam" id="3.30.420.10:FF:000002">
    <property type="entry name" value="Crossover junction endodeoxyribonuclease RuvC"/>
    <property type="match status" value="1"/>
</dbReference>
<dbReference type="Gene3D" id="3.30.420.10">
    <property type="entry name" value="Ribonuclease H-like superfamily/Ribonuclease H"/>
    <property type="match status" value="1"/>
</dbReference>
<dbReference type="HAMAP" id="MF_00034">
    <property type="entry name" value="RuvC"/>
    <property type="match status" value="1"/>
</dbReference>
<dbReference type="InterPro" id="IPR012337">
    <property type="entry name" value="RNaseH-like_sf"/>
</dbReference>
<dbReference type="InterPro" id="IPR036397">
    <property type="entry name" value="RNaseH_sf"/>
</dbReference>
<dbReference type="InterPro" id="IPR020563">
    <property type="entry name" value="X-over_junc_endoDNase_Mg_BS"/>
</dbReference>
<dbReference type="InterPro" id="IPR002176">
    <property type="entry name" value="X-over_junc_endoDNase_RuvC"/>
</dbReference>
<dbReference type="NCBIfam" id="TIGR00228">
    <property type="entry name" value="ruvC"/>
    <property type="match status" value="1"/>
</dbReference>
<dbReference type="PANTHER" id="PTHR30194">
    <property type="entry name" value="CROSSOVER JUNCTION ENDODEOXYRIBONUCLEASE RUVC"/>
    <property type="match status" value="1"/>
</dbReference>
<dbReference type="PANTHER" id="PTHR30194:SF3">
    <property type="entry name" value="CROSSOVER JUNCTION ENDODEOXYRIBONUCLEASE RUVC"/>
    <property type="match status" value="1"/>
</dbReference>
<dbReference type="Pfam" id="PF02075">
    <property type="entry name" value="RuvC"/>
    <property type="match status" value="1"/>
</dbReference>
<dbReference type="PRINTS" id="PR00696">
    <property type="entry name" value="RSOLVASERUVC"/>
</dbReference>
<dbReference type="SUPFAM" id="SSF53098">
    <property type="entry name" value="Ribonuclease H-like"/>
    <property type="match status" value="1"/>
</dbReference>
<dbReference type="PROSITE" id="PS01321">
    <property type="entry name" value="RUVC"/>
    <property type="match status" value="1"/>
</dbReference>
<comment type="function">
    <text evidence="1">The RuvA-RuvB-RuvC complex processes Holliday junction (HJ) DNA during genetic recombination and DNA repair. Endonuclease that resolves HJ intermediates. Cleaves cruciform DNA by making single-stranded nicks across the HJ at symmetrical positions within the homologous arms, yielding a 5'-phosphate and a 3'-hydroxyl group; requires a central core of homology in the junction. The consensus cleavage sequence is 5'-(A/T)TT(C/G)-3'. Cleavage occurs on the 3'-side of the TT dinucleotide at the point of strand exchange. HJ branch migration catalyzed by RuvA-RuvB allows RuvC to scan DNA until it finds its consensus sequence, where it cleaves and resolves the cruciform DNA.</text>
</comment>
<comment type="catalytic activity">
    <reaction evidence="1">
        <text>Endonucleolytic cleavage at a junction such as a reciprocal single-stranded crossover between two homologous DNA duplexes (Holliday junction).</text>
        <dbReference type="EC" id="3.1.21.10"/>
    </reaction>
</comment>
<comment type="cofactor">
    <cofactor evidence="1">
        <name>Mg(2+)</name>
        <dbReference type="ChEBI" id="CHEBI:18420"/>
    </cofactor>
    <text evidence="1">Binds 2 Mg(2+) ion per subunit.</text>
</comment>
<comment type="subunit">
    <text evidence="1">Homodimer which binds Holliday junction (HJ) DNA. The HJ becomes 2-fold symmetrical on binding to RuvC with unstacked arms; it has a different conformation from HJ DNA in complex with RuvA. In the full resolvosome a probable DNA-RuvA(4)-RuvB(12)-RuvC(2) complex forms which resolves the HJ.</text>
</comment>
<comment type="subcellular location">
    <subcellularLocation>
        <location evidence="1">Cytoplasm</location>
    </subcellularLocation>
</comment>
<comment type="similarity">
    <text evidence="1">Belongs to the RuvC family.</text>
</comment>
<reference key="1">
    <citation type="journal article" date="2004" name="Science">
        <title>The complete genome sequence of Propionibacterium acnes, a commensal of human skin.</title>
        <authorList>
            <person name="Brueggemann H."/>
            <person name="Henne A."/>
            <person name="Hoster F."/>
            <person name="Liesegang H."/>
            <person name="Wiezer A."/>
            <person name="Strittmatter A."/>
            <person name="Hujer S."/>
            <person name="Duerre P."/>
            <person name="Gottschalk G."/>
        </authorList>
    </citation>
    <scope>NUCLEOTIDE SEQUENCE [LARGE SCALE GENOMIC DNA]</scope>
    <source>
        <strain>DSM 16379 / KPA171202</strain>
    </source>
</reference>